<gene>
    <name evidence="2" type="primary">mutM</name>
    <name evidence="2" type="synonym">fpg</name>
    <name type="ordered locus">YE0066</name>
</gene>
<organism>
    <name type="scientific">Yersinia enterocolitica serotype O:8 / biotype 1B (strain NCTC 13174 / 8081)</name>
    <dbReference type="NCBI Taxonomy" id="393305"/>
    <lineage>
        <taxon>Bacteria</taxon>
        <taxon>Pseudomonadati</taxon>
        <taxon>Pseudomonadota</taxon>
        <taxon>Gammaproteobacteria</taxon>
        <taxon>Enterobacterales</taxon>
        <taxon>Yersiniaceae</taxon>
        <taxon>Yersinia</taxon>
    </lineage>
</organism>
<protein>
    <recommendedName>
        <fullName evidence="2">Formamidopyrimidine-DNA glycosylase</fullName>
        <shortName evidence="2">Fapy-DNA glycosylase</shortName>
        <ecNumber evidence="2">3.2.2.23</ecNumber>
    </recommendedName>
    <alternativeName>
        <fullName evidence="2">DNA-(apurinic or apyrimidinic site) lyase MutM</fullName>
        <shortName evidence="2">AP lyase MutM</shortName>
        <ecNumber evidence="2">4.2.99.18</ecNumber>
    </alternativeName>
</protein>
<keyword id="KW-0227">DNA damage</keyword>
<keyword id="KW-0234">DNA repair</keyword>
<keyword id="KW-0238">DNA-binding</keyword>
<keyword id="KW-0326">Glycosidase</keyword>
<keyword id="KW-0378">Hydrolase</keyword>
<keyword id="KW-0456">Lyase</keyword>
<keyword id="KW-0479">Metal-binding</keyword>
<keyword id="KW-0511">Multifunctional enzyme</keyword>
<keyword id="KW-0862">Zinc</keyword>
<keyword id="KW-0863">Zinc-finger</keyword>
<accession>A1JHR7</accession>
<reference key="1">
    <citation type="journal article" date="2006" name="PLoS Genet.">
        <title>The complete genome sequence and comparative genome analysis of the high pathogenicity Yersinia enterocolitica strain 8081.</title>
        <authorList>
            <person name="Thomson N.R."/>
            <person name="Howard S."/>
            <person name="Wren B.W."/>
            <person name="Holden M.T.G."/>
            <person name="Crossman L."/>
            <person name="Challis G.L."/>
            <person name="Churcher C."/>
            <person name="Mungall K."/>
            <person name="Brooks K."/>
            <person name="Chillingworth T."/>
            <person name="Feltwell T."/>
            <person name="Abdellah Z."/>
            <person name="Hauser H."/>
            <person name="Jagels K."/>
            <person name="Maddison M."/>
            <person name="Moule S."/>
            <person name="Sanders M."/>
            <person name="Whitehead S."/>
            <person name="Quail M.A."/>
            <person name="Dougan G."/>
            <person name="Parkhill J."/>
            <person name="Prentice M.B."/>
        </authorList>
    </citation>
    <scope>NUCLEOTIDE SEQUENCE [LARGE SCALE GENOMIC DNA]</scope>
    <source>
        <strain>NCTC 13174 / 8081</strain>
    </source>
</reference>
<comment type="function">
    <text evidence="2">Involved in base excision repair of DNA damaged by oxidation or by mutagenic agents. Acts as a DNA glycosylase that recognizes and removes damaged bases. Has a preference for oxidized purines, such as 7,8-dihydro-8-oxoguanine (8-oxoG). Has AP (apurinic/apyrimidinic) lyase activity and introduces nicks in the DNA strand. Cleaves the DNA backbone by beta-delta elimination to generate a single-strand break at the site of the removed base with both 3'- and 5'-phosphates.</text>
</comment>
<comment type="catalytic activity">
    <reaction evidence="2">
        <text>Hydrolysis of DNA containing ring-opened 7-methylguanine residues, releasing 2,6-diamino-4-hydroxy-5-(N-methyl)formamidopyrimidine.</text>
        <dbReference type="EC" id="3.2.2.23"/>
    </reaction>
</comment>
<comment type="catalytic activity">
    <reaction evidence="2">
        <text>2'-deoxyribonucleotide-(2'-deoxyribose 5'-phosphate)-2'-deoxyribonucleotide-DNA = a 3'-end 2'-deoxyribonucleotide-(2,3-dehydro-2,3-deoxyribose 5'-phosphate)-DNA + a 5'-end 5'-phospho-2'-deoxyribonucleoside-DNA + H(+)</text>
        <dbReference type="Rhea" id="RHEA:66592"/>
        <dbReference type="Rhea" id="RHEA-COMP:13180"/>
        <dbReference type="Rhea" id="RHEA-COMP:16897"/>
        <dbReference type="Rhea" id="RHEA-COMP:17067"/>
        <dbReference type="ChEBI" id="CHEBI:15378"/>
        <dbReference type="ChEBI" id="CHEBI:136412"/>
        <dbReference type="ChEBI" id="CHEBI:157695"/>
        <dbReference type="ChEBI" id="CHEBI:167181"/>
        <dbReference type="EC" id="4.2.99.18"/>
    </reaction>
</comment>
<comment type="cofactor">
    <cofactor evidence="2">
        <name>Zn(2+)</name>
        <dbReference type="ChEBI" id="CHEBI:29105"/>
    </cofactor>
    <text evidence="2">Binds 1 zinc ion per subunit.</text>
</comment>
<comment type="subunit">
    <text evidence="2">Monomer.</text>
</comment>
<comment type="similarity">
    <text evidence="2">Belongs to the FPG family.</text>
</comment>
<sequence length="269" mass="30339">MPELPEVETSRRGIEPYLVGQTILYAVVRNARLRWPVSDEILALSDQPVLSVQRRAKYLLIELKTGWIIVHLGMSGSLRILPEETEAEKHDHVDLVISNGKILRYTDPRRFGAWLWAKDLETSNVLAHLGPEPLSDEFTAEYLFEKSRNKRTVVKQWLMDNKVVVGVGNIYASESLFTAGILPERAAGSLTETEITQLVATIKAVLLHSIEQGGTTLRDFLQSDGKPGYFAQELQVYGRAGELCRRCGNVIEIAKHGQRSTFFCRHCQH</sequence>
<proteinExistence type="inferred from homology"/>
<feature type="initiator methionine" description="Removed" evidence="1">
    <location>
        <position position="1"/>
    </location>
</feature>
<feature type="chain" id="PRO_1000008791" description="Formamidopyrimidine-DNA glycosylase">
    <location>
        <begin position="2"/>
        <end position="269"/>
    </location>
</feature>
<feature type="zinc finger region" description="FPG-type" evidence="2">
    <location>
        <begin position="235"/>
        <end position="269"/>
    </location>
</feature>
<feature type="active site" description="Schiff-base intermediate with DNA" evidence="2">
    <location>
        <position position="2"/>
    </location>
</feature>
<feature type="active site" description="Proton donor" evidence="2">
    <location>
        <position position="3"/>
    </location>
</feature>
<feature type="active site" description="Proton donor; for beta-elimination activity" evidence="2">
    <location>
        <position position="57"/>
    </location>
</feature>
<feature type="active site" description="Proton donor; for delta-elimination activity" evidence="2">
    <location>
        <position position="259"/>
    </location>
</feature>
<feature type="binding site" evidence="2">
    <location>
        <position position="90"/>
    </location>
    <ligand>
        <name>DNA</name>
        <dbReference type="ChEBI" id="CHEBI:16991"/>
    </ligand>
</feature>
<feature type="binding site" evidence="2">
    <location>
        <position position="109"/>
    </location>
    <ligand>
        <name>DNA</name>
        <dbReference type="ChEBI" id="CHEBI:16991"/>
    </ligand>
</feature>
<feature type="binding site" evidence="2">
    <location>
        <position position="150"/>
    </location>
    <ligand>
        <name>DNA</name>
        <dbReference type="ChEBI" id="CHEBI:16991"/>
    </ligand>
</feature>
<name>FPG_YERE8</name>
<dbReference type="EC" id="3.2.2.23" evidence="2"/>
<dbReference type="EC" id="4.2.99.18" evidence="2"/>
<dbReference type="EMBL" id="AM286415">
    <property type="protein sequence ID" value="CAL10208.1"/>
    <property type="molecule type" value="Genomic_DNA"/>
</dbReference>
<dbReference type="RefSeq" id="WP_005175950.1">
    <property type="nucleotide sequence ID" value="NC_008800.1"/>
</dbReference>
<dbReference type="RefSeq" id="YP_001004460.1">
    <property type="nucleotide sequence ID" value="NC_008800.1"/>
</dbReference>
<dbReference type="SMR" id="A1JHR7"/>
<dbReference type="KEGG" id="yen:YE0066"/>
<dbReference type="PATRIC" id="fig|393305.7.peg.155"/>
<dbReference type="eggNOG" id="COG0266">
    <property type="taxonomic scope" value="Bacteria"/>
</dbReference>
<dbReference type="HOGENOM" id="CLU_038423_1_1_6"/>
<dbReference type="OrthoDB" id="9800855at2"/>
<dbReference type="Proteomes" id="UP000000642">
    <property type="component" value="Chromosome"/>
</dbReference>
<dbReference type="GO" id="GO:0034039">
    <property type="term" value="F:8-oxo-7,8-dihydroguanine DNA N-glycosylase activity"/>
    <property type="evidence" value="ECO:0007669"/>
    <property type="project" value="TreeGrafter"/>
</dbReference>
<dbReference type="GO" id="GO:0140078">
    <property type="term" value="F:class I DNA-(apurinic or apyrimidinic site) endonuclease activity"/>
    <property type="evidence" value="ECO:0007669"/>
    <property type="project" value="UniProtKB-EC"/>
</dbReference>
<dbReference type="GO" id="GO:0003684">
    <property type="term" value="F:damaged DNA binding"/>
    <property type="evidence" value="ECO:0007669"/>
    <property type="project" value="InterPro"/>
</dbReference>
<dbReference type="GO" id="GO:0008270">
    <property type="term" value="F:zinc ion binding"/>
    <property type="evidence" value="ECO:0007669"/>
    <property type="project" value="UniProtKB-UniRule"/>
</dbReference>
<dbReference type="GO" id="GO:0006284">
    <property type="term" value="P:base-excision repair"/>
    <property type="evidence" value="ECO:0007669"/>
    <property type="project" value="InterPro"/>
</dbReference>
<dbReference type="CDD" id="cd08966">
    <property type="entry name" value="EcFpg-like_N"/>
    <property type="match status" value="1"/>
</dbReference>
<dbReference type="FunFam" id="1.10.8.50:FF:000003">
    <property type="entry name" value="Formamidopyrimidine-DNA glycosylase"/>
    <property type="match status" value="1"/>
</dbReference>
<dbReference type="FunFam" id="3.20.190.10:FF:000001">
    <property type="entry name" value="Formamidopyrimidine-DNA glycosylase"/>
    <property type="match status" value="1"/>
</dbReference>
<dbReference type="Gene3D" id="1.10.8.50">
    <property type="match status" value="1"/>
</dbReference>
<dbReference type="Gene3D" id="3.20.190.10">
    <property type="entry name" value="MutM-like, N-terminal"/>
    <property type="match status" value="1"/>
</dbReference>
<dbReference type="HAMAP" id="MF_00103">
    <property type="entry name" value="Fapy_DNA_glycosyl"/>
    <property type="match status" value="1"/>
</dbReference>
<dbReference type="InterPro" id="IPR015886">
    <property type="entry name" value="DNA_glyclase/AP_lyase_DNA-bd"/>
</dbReference>
<dbReference type="InterPro" id="IPR015887">
    <property type="entry name" value="DNA_glyclase_Znf_dom_DNA_BS"/>
</dbReference>
<dbReference type="InterPro" id="IPR020629">
    <property type="entry name" value="Formamido-pyr_DNA_Glyclase"/>
</dbReference>
<dbReference type="InterPro" id="IPR012319">
    <property type="entry name" value="FPG_cat"/>
</dbReference>
<dbReference type="InterPro" id="IPR035937">
    <property type="entry name" value="MutM-like_N-ter"/>
</dbReference>
<dbReference type="InterPro" id="IPR010979">
    <property type="entry name" value="Ribosomal_uS13-like_H2TH"/>
</dbReference>
<dbReference type="InterPro" id="IPR000214">
    <property type="entry name" value="Znf_DNA_glyclase/AP_lyase"/>
</dbReference>
<dbReference type="InterPro" id="IPR010663">
    <property type="entry name" value="Znf_FPG/IleRS"/>
</dbReference>
<dbReference type="NCBIfam" id="TIGR00577">
    <property type="entry name" value="fpg"/>
    <property type="match status" value="1"/>
</dbReference>
<dbReference type="NCBIfam" id="NF002211">
    <property type="entry name" value="PRK01103.1"/>
    <property type="match status" value="1"/>
</dbReference>
<dbReference type="PANTHER" id="PTHR22993">
    <property type="entry name" value="FORMAMIDOPYRIMIDINE-DNA GLYCOSYLASE"/>
    <property type="match status" value="1"/>
</dbReference>
<dbReference type="PANTHER" id="PTHR22993:SF9">
    <property type="entry name" value="FORMAMIDOPYRIMIDINE-DNA GLYCOSYLASE"/>
    <property type="match status" value="1"/>
</dbReference>
<dbReference type="Pfam" id="PF01149">
    <property type="entry name" value="Fapy_DNA_glyco"/>
    <property type="match status" value="1"/>
</dbReference>
<dbReference type="Pfam" id="PF06831">
    <property type="entry name" value="H2TH"/>
    <property type="match status" value="1"/>
</dbReference>
<dbReference type="Pfam" id="PF06827">
    <property type="entry name" value="zf-FPG_IleRS"/>
    <property type="match status" value="1"/>
</dbReference>
<dbReference type="SMART" id="SM00898">
    <property type="entry name" value="Fapy_DNA_glyco"/>
    <property type="match status" value="1"/>
</dbReference>
<dbReference type="SMART" id="SM01232">
    <property type="entry name" value="H2TH"/>
    <property type="match status" value="1"/>
</dbReference>
<dbReference type="SUPFAM" id="SSF57716">
    <property type="entry name" value="Glucocorticoid receptor-like (DNA-binding domain)"/>
    <property type="match status" value="1"/>
</dbReference>
<dbReference type="SUPFAM" id="SSF81624">
    <property type="entry name" value="N-terminal domain of MutM-like DNA repair proteins"/>
    <property type="match status" value="1"/>
</dbReference>
<dbReference type="SUPFAM" id="SSF46946">
    <property type="entry name" value="S13-like H2TH domain"/>
    <property type="match status" value="1"/>
</dbReference>
<dbReference type="PROSITE" id="PS51068">
    <property type="entry name" value="FPG_CAT"/>
    <property type="match status" value="1"/>
</dbReference>
<dbReference type="PROSITE" id="PS01242">
    <property type="entry name" value="ZF_FPG_1"/>
    <property type="match status" value="1"/>
</dbReference>
<dbReference type="PROSITE" id="PS51066">
    <property type="entry name" value="ZF_FPG_2"/>
    <property type="match status" value="1"/>
</dbReference>
<evidence type="ECO:0000250" key="1"/>
<evidence type="ECO:0000255" key="2">
    <source>
        <dbReference type="HAMAP-Rule" id="MF_00103"/>
    </source>
</evidence>